<gene>
    <name evidence="1" type="primary">murA</name>
    <name type="ordered locus">BWG_2891</name>
</gene>
<feature type="chain" id="PRO_1000202928" description="UDP-N-acetylglucosamine 1-carboxyvinyltransferase">
    <location>
        <begin position="1"/>
        <end position="419"/>
    </location>
</feature>
<feature type="active site" description="Proton donor" evidence="1">
    <location>
        <position position="115"/>
    </location>
</feature>
<feature type="binding site" evidence="1">
    <location>
        <begin position="22"/>
        <end position="23"/>
    </location>
    <ligand>
        <name>phosphoenolpyruvate</name>
        <dbReference type="ChEBI" id="CHEBI:58702"/>
    </ligand>
</feature>
<feature type="binding site" evidence="1">
    <location>
        <position position="91"/>
    </location>
    <ligand>
        <name>UDP-N-acetyl-alpha-D-glucosamine</name>
        <dbReference type="ChEBI" id="CHEBI:57705"/>
    </ligand>
</feature>
<feature type="binding site" evidence="1">
    <location>
        <begin position="120"/>
        <end position="124"/>
    </location>
    <ligand>
        <name>UDP-N-acetyl-alpha-D-glucosamine</name>
        <dbReference type="ChEBI" id="CHEBI:57705"/>
    </ligand>
</feature>
<feature type="binding site" evidence="1">
    <location>
        <begin position="160"/>
        <end position="163"/>
    </location>
    <ligand>
        <name>UDP-N-acetyl-alpha-D-glucosamine</name>
        <dbReference type="ChEBI" id="CHEBI:57705"/>
    </ligand>
</feature>
<feature type="binding site" evidence="1">
    <location>
        <position position="305"/>
    </location>
    <ligand>
        <name>UDP-N-acetyl-alpha-D-glucosamine</name>
        <dbReference type="ChEBI" id="CHEBI:57705"/>
    </ligand>
</feature>
<feature type="binding site" evidence="1">
    <location>
        <position position="327"/>
    </location>
    <ligand>
        <name>UDP-N-acetyl-alpha-D-glucosamine</name>
        <dbReference type="ChEBI" id="CHEBI:57705"/>
    </ligand>
</feature>
<feature type="modified residue" description="2-(S-cysteinyl)pyruvic acid O-phosphothioketal" evidence="1">
    <location>
        <position position="115"/>
    </location>
</feature>
<comment type="function">
    <text evidence="1">Cell wall formation. Adds enolpyruvyl to UDP-N-acetylglucosamine.</text>
</comment>
<comment type="catalytic activity">
    <reaction evidence="1">
        <text>phosphoenolpyruvate + UDP-N-acetyl-alpha-D-glucosamine = UDP-N-acetyl-3-O-(1-carboxyvinyl)-alpha-D-glucosamine + phosphate</text>
        <dbReference type="Rhea" id="RHEA:18681"/>
        <dbReference type="ChEBI" id="CHEBI:43474"/>
        <dbReference type="ChEBI" id="CHEBI:57705"/>
        <dbReference type="ChEBI" id="CHEBI:58702"/>
        <dbReference type="ChEBI" id="CHEBI:68483"/>
        <dbReference type="EC" id="2.5.1.7"/>
    </reaction>
</comment>
<comment type="pathway">
    <text evidence="1">Cell wall biogenesis; peptidoglycan biosynthesis.</text>
</comment>
<comment type="subcellular location">
    <subcellularLocation>
        <location evidence="1">Cytoplasm</location>
    </subcellularLocation>
</comment>
<comment type="similarity">
    <text evidence="1">Belongs to the EPSP synthase family. MurA subfamily.</text>
</comment>
<reference key="1">
    <citation type="journal article" date="2009" name="J. Bacteriol.">
        <title>Genomic sequencing reveals regulatory mutations and recombinational events in the widely used MC4100 lineage of Escherichia coli K-12.</title>
        <authorList>
            <person name="Ferenci T."/>
            <person name="Zhou Z."/>
            <person name="Betteridge T."/>
            <person name="Ren Y."/>
            <person name="Liu Y."/>
            <person name="Feng L."/>
            <person name="Reeves P.R."/>
            <person name="Wang L."/>
        </authorList>
    </citation>
    <scope>NUCLEOTIDE SEQUENCE [LARGE SCALE GENOMIC DNA]</scope>
    <source>
        <strain>K12 / MC4100 / BW2952</strain>
    </source>
</reference>
<dbReference type="EC" id="2.5.1.7" evidence="1"/>
<dbReference type="EMBL" id="CP001396">
    <property type="protein sequence ID" value="ACR65746.1"/>
    <property type="molecule type" value="Genomic_DNA"/>
</dbReference>
<dbReference type="RefSeq" id="WP_000357281.1">
    <property type="nucleotide sequence ID" value="NC_012759.1"/>
</dbReference>
<dbReference type="SMR" id="C4ZSS8"/>
<dbReference type="KEGG" id="ebw:BWG_2891"/>
<dbReference type="HOGENOM" id="CLU_027387_0_0_6"/>
<dbReference type="UniPathway" id="UPA00219"/>
<dbReference type="GO" id="GO:0005737">
    <property type="term" value="C:cytoplasm"/>
    <property type="evidence" value="ECO:0007669"/>
    <property type="project" value="UniProtKB-SubCell"/>
</dbReference>
<dbReference type="GO" id="GO:0008760">
    <property type="term" value="F:UDP-N-acetylglucosamine 1-carboxyvinyltransferase activity"/>
    <property type="evidence" value="ECO:0007669"/>
    <property type="project" value="UniProtKB-UniRule"/>
</dbReference>
<dbReference type="GO" id="GO:0051301">
    <property type="term" value="P:cell division"/>
    <property type="evidence" value="ECO:0007669"/>
    <property type="project" value="UniProtKB-KW"/>
</dbReference>
<dbReference type="GO" id="GO:0071555">
    <property type="term" value="P:cell wall organization"/>
    <property type="evidence" value="ECO:0007669"/>
    <property type="project" value="UniProtKB-KW"/>
</dbReference>
<dbReference type="GO" id="GO:0009252">
    <property type="term" value="P:peptidoglycan biosynthetic process"/>
    <property type="evidence" value="ECO:0007669"/>
    <property type="project" value="UniProtKB-UniRule"/>
</dbReference>
<dbReference type="GO" id="GO:0008360">
    <property type="term" value="P:regulation of cell shape"/>
    <property type="evidence" value="ECO:0007669"/>
    <property type="project" value="UniProtKB-KW"/>
</dbReference>
<dbReference type="GO" id="GO:0019277">
    <property type="term" value="P:UDP-N-acetylgalactosamine biosynthetic process"/>
    <property type="evidence" value="ECO:0007669"/>
    <property type="project" value="InterPro"/>
</dbReference>
<dbReference type="CDD" id="cd01555">
    <property type="entry name" value="UdpNAET"/>
    <property type="match status" value="1"/>
</dbReference>
<dbReference type="FunFam" id="3.65.10.10:FF:000002">
    <property type="entry name" value="UDP-N-acetylglucosamine 1-carboxyvinyltransferase"/>
    <property type="match status" value="1"/>
</dbReference>
<dbReference type="Gene3D" id="3.65.10.10">
    <property type="entry name" value="Enolpyruvate transferase domain"/>
    <property type="match status" value="2"/>
</dbReference>
<dbReference type="HAMAP" id="MF_00111">
    <property type="entry name" value="MurA"/>
    <property type="match status" value="1"/>
</dbReference>
<dbReference type="InterPro" id="IPR001986">
    <property type="entry name" value="Enolpyruvate_Tfrase_dom"/>
</dbReference>
<dbReference type="InterPro" id="IPR036968">
    <property type="entry name" value="Enolpyruvate_Tfrase_sf"/>
</dbReference>
<dbReference type="InterPro" id="IPR050068">
    <property type="entry name" value="MurA_subfamily"/>
</dbReference>
<dbReference type="InterPro" id="IPR013792">
    <property type="entry name" value="RNA3'P_cycl/enolpyr_Trfase_a/b"/>
</dbReference>
<dbReference type="InterPro" id="IPR005750">
    <property type="entry name" value="UDP_GlcNAc_COvinyl_MurA"/>
</dbReference>
<dbReference type="NCBIfam" id="TIGR01072">
    <property type="entry name" value="murA"/>
    <property type="match status" value="1"/>
</dbReference>
<dbReference type="NCBIfam" id="NF006873">
    <property type="entry name" value="PRK09369.1"/>
    <property type="match status" value="1"/>
</dbReference>
<dbReference type="PANTHER" id="PTHR43783">
    <property type="entry name" value="UDP-N-ACETYLGLUCOSAMINE 1-CARBOXYVINYLTRANSFERASE"/>
    <property type="match status" value="1"/>
</dbReference>
<dbReference type="PANTHER" id="PTHR43783:SF1">
    <property type="entry name" value="UDP-N-ACETYLGLUCOSAMINE 1-CARBOXYVINYLTRANSFERASE"/>
    <property type="match status" value="1"/>
</dbReference>
<dbReference type="Pfam" id="PF00275">
    <property type="entry name" value="EPSP_synthase"/>
    <property type="match status" value="1"/>
</dbReference>
<dbReference type="SUPFAM" id="SSF55205">
    <property type="entry name" value="EPT/RTPC-like"/>
    <property type="match status" value="1"/>
</dbReference>
<organism>
    <name type="scientific">Escherichia coli (strain K12 / MC4100 / BW2952)</name>
    <dbReference type="NCBI Taxonomy" id="595496"/>
    <lineage>
        <taxon>Bacteria</taxon>
        <taxon>Pseudomonadati</taxon>
        <taxon>Pseudomonadota</taxon>
        <taxon>Gammaproteobacteria</taxon>
        <taxon>Enterobacterales</taxon>
        <taxon>Enterobacteriaceae</taxon>
        <taxon>Escherichia</taxon>
    </lineage>
</organism>
<proteinExistence type="inferred from homology"/>
<protein>
    <recommendedName>
        <fullName evidence="1">UDP-N-acetylglucosamine 1-carboxyvinyltransferase</fullName>
        <ecNumber evidence="1">2.5.1.7</ecNumber>
    </recommendedName>
    <alternativeName>
        <fullName evidence="1">Enoylpyruvate transferase</fullName>
    </alternativeName>
    <alternativeName>
        <fullName evidence="1">UDP-N-acetylglucosamine enolpyruvyl transferase</fullName>
        <shortName evidence="1">EPT</shortName>
    </alternativeName>
</protein>
<accession>C4ZSS8</accession>
<keyword id="KW-0131">Cell cycle</keyword>
<keyword id="KW-0132">Cell division</keyword>
<keyword id="KW-0133">Cell shape</keyword>
<keyword id="KW-0961">Cell wall biogenesis/degradation</keyword>
<keyword id="KW-0963">Cytoplasm</keyword>
<keyword id="KW-0573">Peptidoglycan synthesis</keyword>
<keyword id="KW-0670">Pyruvate</keyword>
<keyword id="KW-0808">Transferase</keyword>
<evidence type="ECO:0000255" key="1">
    <source>
        <dbReference type="HAMAP-Rule" id="MF_00111"/>
    </source>
</evidence>
<sequence length="419" mass="44819">MDKFRVQGPTKLQGEVTISGAKNAALPNLFAALLAEEPVEIQNVPKLKDVDTSMKLLSQLGAKVERNGSVHIDARDVNVFCAPYDLVKTMRASIWALGPLVARFGQGQVSLPGGCTIGARPVDLHISGLEQLGATIKLEEGYVKASVDGRLKGAHIVMDKVSVGATVTIMCAATLAEGTTIIENAAREPEIVDTANFLITLGAKISGQGTDRIVIEGVERLGGGVYRVLPDRIETGTFLVAAAISRGKIICRNAQPDTLDAVLAKLRDAGADIEVGEDWISLDMHGKRPKAVNVRTAPHPAFPTDMQAQFTLLNLVAEGTGFITETVFENRFMHVPELSRMGAHAEIESNTVICHGVEKLSGAQVMATDLRASASLVLAGCIAEGTTVVDRIYHIDRGYERIEDKLRALGANIERVKGE</sequence>
<name>MURA_ECOBW</name>